<evidence type="ECO:0000255" key="1">
    <source>
        <dbReference type="HAMAP-Rule" id="MF_00182"/>
    </source>
</evidence>
<reference key="1">
    <citation type="journal article" date="2010" name="Genome Biol.">
        <title>Structure and dynamics of the pan-genome of Streptococcus pneumoniae and closely related species.</title>
        <authorList>
            <person name="Donati C."/>
            <person name="Hiller N.L."/>
            <person name="Tettelin H."/>
            <person name="Muzzi A."/>
            <person name="Croucher N.J."/>
            <person name="Angiuoli S.V."/>
            <person name="Oggioni M."/>
            <person name="Dunning Hotopp J.C."/>
            <person name="Hu F.Z."/>
            <person name="Riley D.R."/>
            <person name="Covacci A."/>
            <person name="Mitchell T.J."/>
            <person name="Bentley S.D."/>
            <person name="Kilian M."/>
            <person name="Ehrlich G.D."/>
            <person name="Rappuoli R."/>
            <person name="Moxon E.R."/>
            <person name="Masignani V."/>
        </authorList>
    </citation>
    <scope>NUCLEOTIDE SEQUENCE [LARGE SCALE GENOMIC DNA]</scope>
    <source>
        <strain>Hungary19A-6</strain>
    </source>
</reference>
<sequence length="311" mass="33987">MTKLIFMGTPDFSATVLKGLLTDDRYEILAVVTQPDRAVGRKKVIQETPVKQAAKEAGLSIYQPEKLSGSPEMEDLMKLGADGIVTAAFGQFLPSKLLDSMDFAVNVHASLLPRHRGGAPIHYALIQGDEEAGVTIMEMVKEMDAGDMISRRSIPITDEDNVGTLFEKLALVGRDLLLDTLPAYIAGDIKPEPQDTSQVTFSPNIKPEEEKLDWNKTNRQLFNQIRGMNPWPVAHTFLKGDRFKIYEALPVEGQGNPGEILSIGKKELIVATAEGALSLKQVQPAGKPKMDIASFLNGVGRTLTVGERFGD</sequence>
<organism>
    <name type="scientific">Streptococcus pneumoniae (strain Hungary19A-6)</name>
    <dbReference type="NCBI Taxonomy" id="487214"/>
    <lineage>
        <taxon>Bacteria</taxon>
        <taxon>Bacillati</taxon>
        <taxon>Bacillota</taxon>
        <taxon>Bacilli</taxon>
        <taxon>Lactobacillales</taxon>
        <taxon>Streptococcaceae</taxon>
        <taxon>Streptococcus</taxon>
    </lineage>
</organism>
<protein>
    <recommendedName>
        <fullName evidence="1">Methionyl-tRNA formyltransferase</fullName>
        <ecNumber evidence="1">2.1.2.9</ecNumber>
    </recommendedName>
</protein>
<keyword id="KW-0648">Protein biosynthesis</keyword>
<keyword id="KW-0808">Transferase</keyword>
<dbReference type="EC" id="2.1.2.9" evidence="1"/>
<dbReference type="EMBL" id="CP000936">
    <property type="protein sequence ID" value="ACA36629.1"/>
    <property type="molecule type" value="Genomic_DNA"/>
</dbReference>
<dbReference type="RefSeq" id="WP_000163693.1">
    <property type="nucleotide sequence ID" value="NC_010380.1"/>
</dbReference>
<dbReference type="SMR" id="B1I7J8"/>
<dbReference type="KEGG" id="spv:SPH_1844"/>
<dbReference type="HOGENOM" id="CLU_033347_1_1_9"/>
<dbReference type="Proteomes" id="UP000002163">
    <property type="component" value="Chromosome"/>
</dbReference>
<dbReference type="GO" id="GO:0005829">
    <property type="term" value="C:cytosol"/>
    <property type="evidence" value="ECO:0007669"/>
    <property type="project" value="TreeGrafter"/>
</dbReference>
<dbReference type="GO" id="GO:0004479">
    <property type="term" value="F:methionyl-tRNA formyltransferase activity"/>
    <property type="evidence" value="ECO:0007669"/>
    <property type="project" value="UniProtKB-UniRule"/>
</dbReference>
<dbReference type="CDD" id="cd08646">
    <property type="entry name" value="FMT_core_Met-tRNA-FMT_N"/>
    <property type="match status" value="1"/>
</dbReference>
<dbReference type="CDD" id="cd08704">
    <property type="entry name" value="Met_tRNA_FMT_C"/>
    <property type="match status" value="1"/>
</dbReference>
<dbReference type="FunFam" id="3.10.25.10:FF:000004">
    <property type="entry name" value="Methionyl-tRNA formyltransferase"/>
    <property type="match status" value="1"/>
</dbReference>
<dbReference type="FunFam" id="3.40.50.170:FF:000004">
    <property type="entry name" value="Methionyl-tRNA formyltransferase"/>
    <property type="match status" value="1"/>
</dbReference>
<dbReference type="Gene3D" id="3.10.25.10">
    <property type="entry name" value="Formyl transferase, C-terminal domain"/>
    <property type="match status" value="1"/>
</dbReference>
<dbReference type="Gene3D" id="3.40.50.170">
    <property type="entry name" value="Formyl transferase, N-terminal domain"/>
    <property type="match status" value="1"/>
</dbReference>
<dbReference type="HAMAP" id="MF_00182">
    <property type="entry name" value="Formyl_trans"/>
    <property type="match status" value="1"/>
</dbReference>
<dbReference type="InterPro" id="IPR005794">
    <property type="entry name" value="Fmt"/>
</dbReference>
<dbReference type="InterPro" id="IPR005793">
    <property type="entry name" value="Formyl_trans_C"/>
</dbReference>
<dbReference type="InterPro" id="IPR037022">
    <property type="entry name" value="Formyl_trans_C_sf"/>
</dbReference>
<dbReference type="InterPro" id="IPR002376">
    <property type="entry name" value="Formyl_transf_N"/>
</dbReference>
<dbReference type="InterPro" id="IPR036477">
    <property type="entry name" value="Formyl_transf_N_sf"/>
</dbReference>
<dbReference type="InterPro" id="IPR011034">
    <property type="entry name" value="Formyl_transferase-like_C_sf"/>
</dbReference>
<dbReference type="InterPro" id="IPR001555">
    <property type="entry name" value="GART_AS"/>
</dbReference>
<dbReference type="InterPro" id="IPR044135">
    <property type="entry name" value="Met-tRNA-FMT_C"/>
</dbReference>
<dbReference type="InterPro" id="IPR041711">
    <property type="entry name" value="Met-tRNA-FMT_N"/>
</dbReference>
<dbReference type="NCBIfam" id="TIGR00460">
    <property type="entry name" value="fmt"/>
    <property type="match status" value="1"/>
</dbReference>
<dbReference type="PANTHER" id="PTHR11138">
    <property type="entry name" value="METHIONYL-TRNA FORMYLTRANSFERASE"/>
    <property type="match status" value="1"/>
</dbReference>
<dbReference type="PANTHER" id="PTHR11138:SF5">
    <property type="entry name" value="METHIONYL-TRNA FORMYLTRANSFERASE, MITOCHONDRIAL"/>
    <property type="match status" value="1"/>
</dbReference>
<dbReference type="Pfam" id="PF02911">
    <property type="entry name" value="Formyl_trans_C"/>
    <property type="match status" value="1"/>
</dbReference>
<dbReference type="Pfam" id="PF00551">
    <property type="entry name" value="Formyl_trans_N"/>
    <property type="match status" value="1"/>
</dbReference>
<dbReference type="SUPFAM" id="SSF50486">
    <property type="entry name" value="FMT C-terminal domain-like"/>
    <property type="match status" value="1"/>
</dbReference>
<dbReference type="SUPFAM" id="SSF53328">
    <property type="entry name" value="Formyltransferase"/>
    <property type="match status" value="1"/>
</dbReference>
<dbReference type="PROSITE" id="PS00373">
    <property type="entry name" value="GART"/>
    <property type="match status" value="1"/>
</dbReference>
<name>FMT_STRPI</name>
<proteinExistence type="inferred from homology"/>
<feature type="chain" id="PRO_1000098449" description="Methionyl-tRNA formyltransferase">
    <location>
        <begin position="1"/>
        <end position="311"/>
    </location>
</feature>
<feature type="binding site" evidence="1">
    <location>
        <begin position="110"/>
        <end position="113"/>
    </location>
    <ligand>
        <name>(6S)-5,6,7,8-tetrahydrofolate</name>
        <dbReference type="ChEBI" id="CHEBI:57453"/>
    </ligand>
</feature>
<comment type="function">
    <text evidence="1">Attaches a formyl group to the free amino group of methionyl-tRNA(fMet). The formyl group appears to play a dual role in the initiator identity of N-formylmethionyl-tRNA by promoting its recognition by IF2 and preventing the misappropriation of this tRNA by the elongation apparatus.</text>
</comment>
<comment type="catalytic activity">
    <reaction evidence="1">
        <text>L-methionyl-tRNA(fMet) + (6R)-10-formyltetrahydrofolate = N-formyl-L-methionyl-tRNA(fMet) + (6S)-5,6,7,8-tetrahydrofolate + H(+)</text>
        <dbReference type="Rhea" id="RHEA:24380"/>
        <dbReference type="Rhea" id="RHEA-COMP:9952"/>
        <dbReference type="Rhea" id="RHEA-COMP:9953"/>
        <dbReference type="ChEBI" id="CHEBI:15378"/>
        <dbReference type="ChEBI" id="CHEBI:57453"/>
        <dbReference type="ChEBI" id="CHEBI:78530"/>
        <dbReference type="ChEBI" id="CHEBI:78844"/>
        <dbReference type="ChEBI" id="CHEBI:195366"/>
        <dbReference type="EC" id="2.1.2.9"/>
    </reaction>
</comment>
<comment type="similarity">
    <text evidence="1">Belongs to the Fmt family.</text>
</comment>
<accession>B1I7J8</accession>
<gene>
    <name evidence="1" type="primary">fmt</name>
    <name type="ordered locus">SPH_1844</name>
</gene>